<name>DXS_SERP5</name>
<gene>
    <name evidence="1" type="primary">dxs</name>
    <name type="ordered locus">Spro_1078</name>
</gene>
<dbReference type="EC" id="2.2.1.7" evidence="1"/>
<dbReference type="EMBL" id="CP000826">
    <property type="protein sequence ID" value="ABV40182.1"/>
    <property type="molecule type" value="Genomic_DNA"/>
</dbReference>
<dbReference type="SMR" id="A8GAP2"/>
<dbReference type="STRING" id="399741.Spro_1078"/>
<dbReference type="KEGG" id="spe:Spro_1078"/>
<dbReference type="eggNOG" id="COG1154">
    <property type="taxonomic scope" value="Bacteria"/>
</dbReference>
<dbReference type="HOGENOM" id="CLU_009227_1_4_6"/>
<dbReference type="OrthoDB" id="9803371at2"/>
<dbReference type="UniPathway" id="UPA00064">
    <property type="reaction ID" value="UER00091"/>
</dbReference>
<dbReference type="GO" id="GO:0005829">
    <property type="term" value="C:cytosol"/>
    <property type="evidence" value="ECO:0007669"/>
    <property type="project" value="TreeGrafter"/>
</dbReference>
<dbReference type="GO" id="GO:0008661">
    <property type="term" value="F:1-deoxy-D-xylulose-5-phosphate synthase activity"/>
    <property type="evidence" value="ECO:0007669"/>
    <property type="project" value="UniProtKB-UniRule"/>
</dbReference>
<dbReference type="GO" id="GO:0000287">
    <property type="term" value="F:magnesium ion binding"/>
    <property type="evidence" value="ECO:0007669"/>
    <property type="project" value="UniProtKB-UniRule"/>
</dbReference>
<dbReference type="GO" id="GO:0030976">
    <property type="term" value="F:thiamine pyrophosphate binding"/>
    <property type="evidence" value="ECO:0007669"/>
    <property type="project" value="UniProtKB-UniRule"/>
</dbReference>
<dbReference type="GO" id="GO:0052865">
    <property type="term" value="P:1-deoxy-D-xylulose 5-phosphate biosynthetic process"/>
    <property type="evidence" value="ECO:0007669"/>
    <property type="project" value="UniProtKB-UniPathway"/>
</dbReference>
<dbReference type="GO" id="GO:0019288">
    <property type="term" value="P:isopentenyl diphosphate biosynthetic process, methylerythritol 4-phosphate pathway"/>
    <property type="evidence" value="ECO:0007669"/>
    <property type="project" value="TreeGrafter"/>
</dbReference>
<dbReference type="GO" id="GO:0016114">
    <property type="term" value="P:terpenoid biosynthetic process"/>
    <property type="evidence" value="ECO:0007669"/>
    <property type="project" value="UniProtKB-UniRule"/>
</dbReference>
<dbReference type="GO" id="GO:0009228">
    <property type="term" value="P:thiamine biosynthetic process"/>
    <property type="evidence" value="ECO:0007669"/>
    <property type="project" value="UniProtKB-UniRule"/>
</dbReference>
<dbReference type="CDD" id="cd02007">
    <property type="entry name" value="TPP_DXS"/>
    <property type="match status" value="1"/>
</dbReference>
<dbReference type="CDD" id="cd07033">
    <property type="entry name" value="TPP_PYR_DXS_TK_like"/>
    <property type="match status" value="1"/>
</dbReference>
<dbReference type="FunFam" id="3.40.50.920:FF:000002">
    <property type="entry name" value="1-deoxy-D-xylulose-5-phosphate synthase"/>
    <property type="match status" value="1"/>
</dbReference>
<dbReference type="FunFam" id="3.40.50.970:FF:000005">
    <property type="entry name" value="1-deoxy-D-xylulose-5-phosphate synthase"/>
    <property type="match status" value="1"/>
</dbReference>
<dbReference type="Gene3D" id="3.40.50.920">
    <property type="match status" value="1"/>
</dbReference>
<dbReference type="Gene3D" id="3.40.50.970">
    <property type="match status" value="2"/>
</dbReference>
<dbReference type="HAMAP" id="MF_00315">
    <property type="entry name" value="DXP_synth"/>
    <property type="match status" value="1"/>
</dbReference>
<dbReference type="InterPro" id="IPR005477">
    <property type="entry name" value="Dxylulose-5-P_synthase"/>
</dbReference>
<dbReference type="InterPro" id="IPR029061">
    <property type="entry name" value="THDP-binding"/>
</dbReference>
<dbReference type="InterPro" id="IPR009014">
    <property type="entry name" value="Transketo_C/PFOR_II"/>
</dbReference>
<dbReference type="InterPro" id="IPR005475">
    <property type="entry name" value="Transketolase-like_Pyr-bd"/>
</dbReference>
<dbReference type="InterPro" id="IPR020826">
    <property type="entry name" value="Transketolase_BS"/>
</dbReference>
<dbReference type="InterPro" id="IPR033248">
    <property type="entry name" value="Transketolase_C"/>
</dbReference>
<dbReference type="InterPro" id="IPR049557">
    <property type="entry name" value="Transketolase_CS"/>
</dbReference>
<dbReference type="NCBIfam" id="TIGR00204">
    <property type="entry name" value="dxs"/>
    <property type="match status" value="1"/>
</dbReference>
<dbReference type="NCBIfam" id="NF003933">
    <property type="entry name" value="PRK05444.2-2"/>
    <property type="match status" value="1"/>
</dbReference>
<dbReference type="PANTHER" id="PTHR43322">
    <property type="entry name" value="1-D-DEOXYXYLULOSE 5-PHOSPHATE SYNTHASE-RELATED"/>
    <property type="match status" value="1"/>
</dbReference>
<dbReference type="PANTHER" id="PTHR43322:SF5">
    <property type="entry name" value="1-DEOXY-D-XYLULOSE-5-PHOSPHATE SYNTHASE, CHLOROPLASTIC"/>
    <property type="match status" value="1"/>
</dbReference>
<dbReference type="Pfam" id="PF13292">
    <property type="entry name" value="DXP_synthase_N"/>
    <property type="match status" value="1"/>
</dbReference>
<dbReference type="Pfam" id="PF02779">
    <property type="entry name" value="Transket_pyr"/>
    <property type="match status" value="1"/>
</dbReference>
<dbReference type="Pfam" id="PF02780">
    <property type="entry name" value="Transketolase_C"/>
    <property type="match status" value="1"/>
</dbReference>
<dbReference type="SMART" id="SM00861">
    <property type="entry name" value="Transket_pyr"/>
    <property type="match status" value="1"/>
</dbReference>
<dbReference type="SUPFAM" id="SSF52518">
    <property type="entry name" value="Thiamin diphosphate-binding fold (THDP-binding)"/>
    <property type="match status" value="2"/>
</dbReference>
<dbReference type="SUPFAM" id="SSF52922">
    <property type="entry name" value="TK C-terminal domain-like"/>
    <property type="match status" value="1"/>
</dbReference>
<dbReference type="PROSITE" id="PS00801">
    <property type="entry name" value="TRANSKETOLASE_1"/>
    <property type="match status" value="1"/>
</dbReference>
<dbReference type="PROSITE" id="PS00802">
    <property type="entry name" value="TRANSKETOLASE_2"/>
    <property type="match status" value="1"/>
</dbReference>
<feature type="chain" id="PRO_1000059449" description="1-deoxy-D-xylulose-5-phosphate synthase">
    <location>
        <begin position="1"/>
        <end position="621"/>
    </location>
</feature>
<feature type="binding site" evidence="1">
    <location>
        <position position="80"/>
    </location>
    <ligand>
        <name>thiamine diphosphate</name>
        <dbReference type="ChEBI" id="CHEBI:58937"/>
    </ligand>
</feature>
<feature type="binding site" evidence="1">
    <location>
        <begin position="121"/>
        <end position="123"/>
    </location>
    <ligand>
        <name>thiamine diphosphate</name>
        <dbReference type="ChEBI" id="CHEBI:58937"/>
    </ligand>
</feature>
<feature type="binding site" evidence="1">
    <location>
        <position position="152"/>
    </location>
    <ligand>
        <name>Mg(2+)</name>
        <dbReference type="ChEBI" id="CHEBI:18420"/>
    </ligand>
</feature>
<feature type="binding site" evidence="1">
    <location>
        <begin position="153"/>
        <end position="154"/>
    </location>
    <ligand>
        <name>thiamine diphosphate</name>
        <dbReference type="ChEBI" id="CHEBI:58937"/>
    </ligand>
</feature>
<feature type="binding site" evidence="1">
    <location>
        <position position="181"/>
    </location>
    <ligand>
        <name>Mg(2+)</name>
        <dbReference type="ChEBI" id="CHEBI:18420"/>
    </ligand>
</feature>
<feature type="binding site" evidence="1">
    <location>
        <position position="181"/>
    </location>
    <ligand>
        <name>thiamine diphosphate</name>
        <dbReference type="ChEBI" id="CHEBI:58937"/>
    </ligand>
</feature>
<feature type="binding site" evidence="1">
    <location>
        <position position="288"/>
    </location>
    <ligand>
        <name>thiamine diphosphate</name>
        <dbReference type="ChEBI" id="CHEBI:58937"/>
    </ligand>
</feature>
<feature type="binding site" evidence="1">
    <location>
        <position position="370"/>
    </location>
    <ligand>
        <name>thiamine diphosphate</name>
        <dbReference type="ChEBI" id="CHEBI:58937"/>
    </ligand>
</feature>
<comment type="function">
    <text evidence="1">Catalyzes the acyloin condensation reaction between C atoms 2 and 3 of pyruvate and glyceraldehyde 3-phosphate to yield 1-deoxy-D-xylulose-5-phosphate (DXP).</text>
</comment>
<comment type="catalytic activity">
    <reaction evidence="1">
        <text>D-glyceraldehyde 3-phosphate + pyruvate + H(+) = 1-deoxy-D-xylulose 5-phosphate + CO2</text>
        <dbReference type="Rhea" id="RHEA:12605"/>
        <dbReference type="ChEBI" id="CHEBI:15361"/>
        <dbReference type="ChEBI" id="CHEBI:15378"/>
        <dbReference type="ChEBI" id="CHEBI:16526"/>
        <dbReference type="ChEBI" id="CHEBI:57792"/>
        <dbReference type="ChEBI" id="CHEBI:59776"/>
        <dbReference type="EC" id="2.2.1.7"/>
    </reaction>
</comment>
<comment type="cofactor">
    <cofactor evidence="1">
        <name>Mg(2+)</name>
        <dbReference type="ChEBI" id="CHEBI:18420"/>
    </cofactor>
    <text evidence="1">Binds 1 Mg(2+) ion per subunit.</text>
</comment>
<comment type="cofactor">
    <cofactor evidence="1">
        <name>thiamine diphosphate</name>
        <dbReference type="ChEBI" id="CHEBI:58937"/>
    </cofactor>
    <text evidence="1">Binds 1 thiamine pyrophosphate per subunit.</text>
</comment>
<comment type="pathway">
    <text evidence="1">Metabolic intermediate biosynthesis; 1-deoxy-D-xylulose 5-phosphate biosynthesis; 1-deoxy-D-xylulose 5-phosphate from D-glyceraldehyde 3-phosphate and pyruvate: step 1/1.</text>
</comment>
<comment type="subunit">
    <text evidence="1">Homodimer.</text>
</comment>
<comment type="similarity">
    <text evidence="1">Belongs to the transketolase family. DXPS subfamily.</text>
</comment>
<accession>A8GAP2</accession>
<proteinExistence type="inferred from homology"/>
<reference key="1">
    <citation type="submission" date="2007-09" db="EMBL/GenBank/DDBJ databases">
        <title>Complete sequence of chromosome of Serratia proteamaculans 568.</title>
        <authorList>
            <consortium name="US DOE Joint Genome Institute"/>
            <person name="Copeland A."/>
            <person name="Lucas S."/>
            <person name="Lapidus A."/>
            <person name="Barry K."/>
            <person name="Glavina del Rio T."/>
            <person name="Dalin E."/>
            <person name="Tice H."/>
            <person name="Pitluck S."/>
            <person name="Chain P."/>
            <person name="Malfatti S."/>
            <person name="Shin M."/>
            <person name="Vergez L."/>
            <person name="Schmutz J."/>
            <person name="Larimer F."/>
            <person name="Land M."/>
            <person name="Hauser L."/>
            <person name="Kyrpides N."/>
            <person name="Kim E."/>
            <person name="Taghavi S."/>
            <person name="Newman L."/>
            <person name="Vangronsveld J."/>
            <person name="van der Lelie D."/>
            <person name="Richardson P."/>
        </authorList>
    </citation>
    <scope>NUCLEOTIDE SEQUENCE [LARGE SCALE GENOMIC DNA]</scope>
    <source>
        <strain>568</strain>
    </source>
</reference>
<sequence length="621" mass="67413">MSLDIAKYPTLALAENPDELRSLPKESLPKLCDELRQYLLDSVSRSSGHFASGLGTVELTVALHYVYQTPFDHLVWDVGHQAYPHKILTGRRDKIATIRQKNGLHPFPWRAESEYDVLSVGHSSTSISAGLGMAVAAAREGKNRRTVCVIGDGAITAGMAFEAMNHAGDIDPDMLVVLNDNEMSISENVGALNNHLAQLLSGKLYSTLREGGKKVLSGLPPIKELVKRTEEHLKGMVVPGTLFEELGFNYIGPVDGHDVQGLVATLKNMRDLKGPQLLHIMTKKGRGYAPAEKDPISFHAVPKFDPASGTLPKSAGGLPTYSKVFGDWLCETAAKDSSLMAITPAMREGSGMVQFSRDYPQQYFDVAIAEQHAVTFAAGLAIGGYKPVVAIYSTFLQRAYDQLIHDVAIQKLPVMFAIDRGGIVGADGQTHQGAFDLSFMRCIPTMVIMTPSDENECRQMLYTGYHYNEGPSAVRYPRGNGTGAPLEPLNSLPIGKGVVRREGEKLAILNFGTLLPEAAQVAETLNATLVDMRFVKPLDEQLILELAASHDALVTLEENAIMGGAGSGVNELLMARRRVVPVLNIGLPDFFVSQGSQEEVRSDLGLDAAGIQRQIEVWLAQ</sequence>
<organism>
    <name type="scientific">Serratia proteamaculans (strain 568)</name>
    <dbReference type="NCBI Taxonomy" id="399741"/>
    <lineage>
        <taxon>Bacteria</taxon>
        <taxon>Pseudomonadati</taxon>
        <taxon>Pseudomonadota</taxon>
        <taxon>Gammaproteobacteria</taxon>
        <taxon>Enterobacterales</taxon>
        <taxon>Yersiniaceae</taxon>
        <taxon>Serratia</taxon>
    </lineage>
</organism>
<evidence type="ECO:0000255" key="1">
    <source>
        <dbReference type="HAMAP-Rule" id="MF_00315"/>
    </source>
</evidence>
<protein>
    <recommendedName>
        <fullName evidence="1">1-deoxy-D-xylulose-5-phosphate synthase</fullName>
        <ecNumber evidence="1">2.2.1.7</ecNumber>
    </recommendedName>
    <alternativeName>
        <fullName evidence="1">1-deoxyxylulose-5-phosphate synthase</fullName>
        <shortName evidence="1">DXP synthase</shortName>
        <shortName evidence="1">DXPS</shortName>
    </alternativeName>
</protein>
<keyword id="KW-0414">Isoprene biosynthesis</keyword>
<keyword id="KW-0460">Magnesium</keyword>
<keyword id="KW-0479">Metal-binding</keyword>
<keyword id="KW-0784">Thiamine biosynthesis</keyword>
<keyword id="KW-0786">Thiamine pyrophosphate</keyword>
<keyword id="KW-0808">Transferase</keyword>